<reference key="1">
    <citation type="journal article" date="2000" name="J. Biol. Chem.">
        <title>Identification and initial characterization of four novel members of the interleukin-1 family.</title>
        <authorList>
            <person name="Kumar S."/>
            <person name="McDonnell P.C."/>
            <person name="Lehr R."/>
            <person name="Tierney L."/>
            <person name="Tzimas M.N."/>
            <person name="Griswold D.E."/>
            <person name="Capper E.A."/>
            <person name="Tal-Singer R."/>
            <person name="Wells G.I."/>
            <person name="Doyle M.L."/>
            <person name="Young P.R."/>
        </authorList>
    </citation>
    <scope>NUCLEOTIDE SEQUENCE [MRNA] (ISOFORM 1)</scope>
    <scope>INDUCTION</scope>
    <source>
        <tissue>Keratinocyte</tissue>
    </source>
</reference>
<reference key="2">
    <citation type="journal article" date="2001" name="J. Immunol.">
        <title>Two novel IL-1 family members, IL-1 delta and IL-1 epsilon, function as an antagonist and agonist of NF-kappa B activation through the orphan IL-1 receptor-related protein 2.</title>
        <authorList>
            <person name="Debets R."/>
            <person name="Timans J.C."/>
            <person name="Homey B."/>
            <person name="Zurawski S."/>
            <person name="Sana T.R."/>
            <person name="Lo S."/>
            <person name="Wagner J."/>
            <person name="Edwards G."/>
            <person name="Clifford T."/>
            <person name="Menon S."/>
            <person name="Bazan J.F."/>
            <person name="Kastelein R.A."/>
        </authorList>
    </citation>
    <scope>NUCLEOTIDE SEQUENCE [MRNA] (ISOFORM 1)</scope>
    <scope>CHARACTERIZATION</scope>
    <source>
        <tissue>Epithelium</tissue>
    </source>
</reference>
<reference key="3">
    <citation type="journal article" date="2000" name="Genomics">
        <title>Identification and gene organization of three novel members of the IL-1 family on human chromosome 2.</title>
        <authorList>
            <person name="Busfield S.J."/>
            <person name="Comrack C.A."/>
            <person name="Yu G."/>
            <person name="Chickering T.W."/>
            <person name="Smutko J.S."/>
            <person name="Zhou H."/>
            <person name="Leiby K.R."/>
            <person name="Holmgren L.M."/>
            <person name="Gearing D.P."/>
            <person name="Pan Y."/>
        </authorList>
    </citation>
    <scope>NUCLEOTIDE SEQUENCE [GENOMIC DNA]</scope>
</reference>
<reference key="4">
    <citation type="journal article" date="2002" name="Genomics">
        <title>A sequence-based map of the nine genes of the human interleukin-1 cluster.</title>
        <authorList>
            <person name="Nicklin M.J.H."/>
            <person name="Barton J.L."/>
            <person name="Nguyen M."/>
            <person name="Fitzgerald M.G."/>
            <person name="Duff W.G."/>
            <person name="Kornman K."/>
        </authorList>
    </citation>
    <scope>NUCLEOTIDE SEQUENCE [GENOMIC DNA]</scope>
</reference>
<reference key="5">
    <citation type="journal article" date="2003" name="Genome Res.">
        <title>The secreted protein discovery initiative (SPDI), a large-scale effort to identify novel human secreted and transmembrane proteins: a bioinformatics assessment.</title>
        <authorList>
            <person name="Clark H.F."/>
            <person name="Gurney A.L."/>
            <person name="Abaya E."/>
            <person name="Baker K."/>
            <person name="Baldwin D.T."/>
            <person name="Brush J."/>
            <person name="Chen J."/>
            <person name="Chow B."/>
            <person name="Chui C."/>
            <person name="Crowley C."/>
            <person name="Currell B."/>
            <person name="Deuel B."/>
            <person name="Dowd P."/>
            <person name="Eaton D."/>
            <person name="Foster J.S."/>
            <person name="Grimaldi C."/>
            <person name="Gu Q."/>
            <person name="Hass P.E."/>
            <person name="Heldens S."/>
            <person name="Huang A."/>
            <person name="Kim H.S."/>
            <person name="Klimowski L."/>
            <person name="Jin Y."/>
            <person name="Johnson S."/>
            <person name="Lee J."/>
            <person name="Lewis L."/>
            <person name="Liao D."/>
            <person name="Mark M.R."/>
            <person name="Robbie E."/>
            <person name="Sanchez C."/>
            <person name="Schoenfeld J."/>
            <person name="Seshagiri S."/>
            <person name="Simmons L."/>
            <person name="Singh J."/>
            <person name="Smith V."/>
            <person name="Stinson J."/>
            <person name="Vagts A."/>
            <person name="Vandlen R.L."/>
            <person name="Watanabe C."/>
            <person name="Wieand D."/>
            <person name="Woods K."/>
            <person name="Xie M.-H."/>
            <person name="Yansura D.G."/>
            <person name="Yi S."/>
            <person name="Yu G."/>
            <person name="Yuan J."/>
            <person name="Zhang M."/>
            <person name="Zhang Z."/>
            <person name="Goddard A.D."/>
            <person name="Wood W.I."/>
            <person name="Godowski P.J."/>
            <person name="Gray A.M."/>
        </authorList>
    </citation>
    <scope>NUCLEOTIDE SEQUENCE [LARGE SCALE MRNA] (ISOFORM 2)</scope>
</reference>
<reference key="6">
    <citation type="submission" date="2005-03" db="EMBL/GenBank/DDBJ databases">
        <authorList>
            <consortium name="SeattleSNPs variation discovery resource"/>
        </authorList>
    </citation>
    <scope>NUCLEOTIDE SEQUENCE [GENOMIC DNA]</scope>
</reference>
<reference key="7">
    <citation type="journal article" date="2005" name="Nature">
        <title>Generation and annotation of the DNA sequences of human chromosomes 2 and 4.</title>
        <authorList>
            <person name="Hillier L.W."/>
            <person name="Graves T.A."/>
            <person name="Fulton R.S."/>
            <person name="Fulton L.A."/>
            <person name="Pepin K.H."/>
            <person name="Minx P."/>
            <person name="Wagner-McPherson C."/>
            <person name="Layman D."/>
            <person name="Wylie K."/>
            <person name="Sekhon M."/>
            <person name="Becker M.C."/>
            <person name="Fewell G.A."/>
            <person name="Delehaunty K.D."/>
            <person name="Miner T.L."/>
            <person name="Nash W.E."/>
            <person name="Kremitzki C."/>
            <person name="Oddy L."/>
            <person name="Du H."/>
            <person name="Sun H."/>
            <person name="Bradshaw-Cordum H."/>
            <person name="Ali J."/>
            <person name="Carter J."/>
            <person name="Cordes M."/>
            <person name="Harris A."/>
            <person name="Isak A."/>
            <person name="van Brunt A."/>
            <person name="Nguyen C."/>
            <person name="Du F."/>
            <person name="Courtney L."/>
            <person name="Kalicki J."/>
            <person name="Ozersky P."/>
            <person name="Abbott S."/>
            <person name="Armstrong J."/>
            <person name="Belter E.A."/>
            <person name="Caruso L."/>
            <person name="Cedroni M."/>
            <person name="Cotton M."/>
            <person name="Davidson T."/>
            <person name="Desai A."/>
            <person name="Elliott G."/>
            <person name="Erb T."/>
            <person name="Fronick C."/>
            <person name="Gaige T."/>
            <person name="Haakenson W."/>
            <person name="Haglund K."/>
            <person name="Holmes A."/>
            <person name="Harkins R."/>
            <person name="Kim K."/>
            <person name="Kruchowski S.S."/>
            <person name="Strong C.M."/>
            <person name="Grewal N."/>
            <person name="Goyea E."/>
            <person name="Hou S."/>
            <person name="Levy A."/>
            <person name="Martinka S."/>
            <person name="Mead K."/>
            <person name="McLellan M.D."/>
            <person name="Meyer R."/>
            <person name="Randall-Maher J."/>
            <person name="Tomlinson C."/>
            <person name="Dauphin-Kohlberg S."/>
            <person name="Kozlowicz-Reilly A."/>
            <person name="Shah N."/>
            <person name="Swearengen-Shahid S."/>
            <person name="Snider J."/>
            <person name="Strong J.T."/>
            <person name="Thompson J."/>
            <person name="Yoakum M."/>
            <person name="Leonard S."/>
            <person name="Pearman C."/>
            <person name="Trani L."/>
            <person name="Radionenko M."/>
            <person name="Waligorski J.E."/>
            <person name="Wang C."/>
            <person name="Rock S.M."/>
            <person name="Tin-Wollam A.-M."/>
            <person name="Maupin R."/>
            <person name="Latreille P."/>
            <person name="Wendl M.C."/>
            <person name="Yang S.-P."/>
            <person name="Pohl C."/>
            <person name="Wallis J.W."/>
            <person name="Spieth J."/>
            <person name="Bieri T.A."/>
            <person name="Berkowicz N."/>
            <person name="Nelson J.O."/>
            <person name="Osborne J."/>
            <person name="Ding L."/>
            <person name="Meyer R."/>
            <person name="Sabo A."/>
            <person name="Shotland Y."/>
            <person name="Sinha P."/>
            <person name="Wohldmann P.E."/>
            <person name="Cook L.L."/>
            <person name="Hickenbotham M.T."/>
            <person name="Eldred J."/>
            <person name="Williams D."/>
            <person name="Jones T.A."/>
            <person name="She X."/>
            <person name="Ciccarelli F.D."/>
            <person name="Izaurralde E."/>
            <person name="Taylor J."/>
            <person name="Schmutz J."/>
            <person name="Myers R.M."/>
            <person name="Cox D.R."/>
            <person name="Huang X."/>
            <person name="McPherson J.D."/>
            <person name="Mardis E.R."/>
            <person name="Clifton S.W."/>
            <person name="Warren W.C."/>
            <person name="Chinwalla A.T."/>
            <person name="Eddy S.R."/>
            <person name="Marra M.A."/>
            <person name="Ovcharenko I."/>
            <person name="Furey T.S."/>
            <person name="Miller W."/>
            <person name="Eichler E.E."/>
            <person name="Bork P."/>
            <person name="Suyama M."/>
            <person name="Torrents D."/>
            <person name="Waterston R.H."/>
            <person name="Wilson R.K."/>
        </authorList>
    </citation>
    <scope>NUCLEOTIDE SEQUENCE [LARGE SCALE GENOMIC DNA]</scope>
</reference>
<reference key="8">
    <citation type="journal article" date="2004" name="Genome Res.">
        <title>The status, quality, and expansion of the NIH full-length cDNA project: the Mammalian Gene Collection (MGC).</title>
        <authorList>
            <consortium name="The MGC Project Team"/>
        </authorList>
    </citation>
    <scope>NUCLEOTIDE SEQUENCE [LARGE SCALE MRNA] (ISOFORM 1)</scope>
</reference>
<reference key="9">
    <citation type="journal article" date="2011" name="Am. J. Respir. Cell Mol. Biol.">
        <title>Regulation and function of the IL-1 family cytokine IL-1F9 in human bronchial epithelial cells.</title>
        <authorList>
            <person name="Chustz R.T."/>
            <person name="Nagarkar D.R."/>
            <person name="Poposki J.A."/>
            <person name="Favoreto S. Jr."/>
            <person name="Avila P.C."/>
            <person name="Schleimer R.P."/>
            <person name="Kato A."/>
        </authorList>
    </citation>
    <scope>FUNCTION</scope>
    <scope>TISSUE SPECIFICITY</scope>
    <scope>SUBCELLULAR LOCATION</scope>
</reference>
<reference key="10">
    <citation type="journal article" date="2011" name="J. Biol. Chem.">
        <title>Interleukin-36 (IL-36) ligands require processing for full agonist (IL-36alpha, IL-36beta, and IL-36gamma) or antagonist (IL-36Ra) activity.</title>
        <authorList>
            <person name="Towne J.E."/>
            <person name="Renshaw B.R."/>
            <person name="Douangpanya J."/>
            <person name="Lipsky B.P."/>
            <person name="Shen M."/>
            <person name="Gabel C.A."/>
            <person name="Sims J.E."/>
        </authorList>
    </citation>
    <scope>FUNCTION</scope>
    <scope>PROCESSING</scope>
</reference>
<reference key="11">
    <citation type="journal article" date="2012" name="J. Biol. Chem.">
        <title>IL-36gamma/IL-1F9, an innate T-bet target in myeloid cells.</title>
        <authorList>
            <person name="Bachmann M."/>
            <person name="Scheiermann P."/>
            <person name="Hardle L."/>
            <person name="Pfeilschifter J."/>
            <person name="Muhl H."/>
        </authorList>
    </citation>
    <scope>FUNCTION</scope>
    <scope>TISSUE SPECIFICITY</scope>
</reference>
<reference key="12">
    <citation type="journal article" date="2013" name="Eur. J. Immunol.">
        <title>The IL-36 receptor pathway regulates Aspergillus fumigatus-induced Th1 and Th17 responses.</title>
        <authorList>
            <person name="Gresnigt M.S."/>
            <person name="Roesler B."/>
            <person name="Jacobs C.W."/>
            <person name="Becker K.L."/>
            <person name="Joosten L.A."/>
            <person name="van der Meer J.W."/>
            <person name="Netea M.G."/>
            <person name="Dinarello C.A."/>
            <person name="van de Veerdonk F.L."/>
        </authorList>
    </citation>
    <scope>FUNCTION</scope>
    <scope>INDUCTION</scope>
</reference>
<reference key="13">
    <citation type="journal article" date="2014" name="J. Immunol.">
        <title>IL-36 promotes myeloid cell infiltration, activation, and inflammatory activity in skin.</title>
        <authorList>
            <person name="Foster A.M."/>
            <person name="Baliwag J."/>
            <person name="Chen C.S."/>
            <person name="Guzman A.M."/>
            <person name="Stoll S.W."/>
            <person name="Gudjonsson J.E."/>
            <person name="Ward N.L."/>
            <person name="Johnston A."/>
        </authorList>
    </citation>
    <scope>FUNCTION</scope>
</reference>
<reference key="14">
    <citation type="journal article" date="2019" name="Drug Des. Dev. Ther.">
        <title>Cathepsin G cleaves and activates IL-36gamma and promotes the inflammation of psoriasis.</title>
        <authorList>
            <person name="Guo J."/>
            <person name="Tu J."/>
            <person name="Hu Y."/>
            <person name="Song G."/>
            <person name="Yin Z."/>
        </authorList>
    </citation>
    <scope>PROTEOLYTIC CLEAVAGE</scope>
</reference>
<reference key="15">
    <citation type="journal article" date="2020" name="Cell">
        <title>A Translocation Pathway for Vesicle-Mediated Unconventional Protein Secretion.</title>
        <authorList>
            <person name="Zhang M."/>
            <person name="Liu L."/>
            <person name="Lin X."/>
            <person name="Wang Y."/>
            <person name="Li Y."/>
            <person name="Guo Q."/>
            <person name="Li S."/>
            <person name="Sun Y."/>
            <person name="Tao X."/>
            <person name="Zhang D."/>
            <person name="Lv X."/>
            <person name="Zheng L."/>
            <person name="Ge L."/>
        </authorList>
    </citation>
    <scope>SUBCELLULAR LOCATION</scope>
    <scope>INTERACTION WITH TMED10</scope>
</reference>
<sequence length="169" mass="18721">MRGTPGDADGGGRAVYQSMCKPITGTINDLNQQVWTLQGQNLVAVPRSDSVTPVTVAVITCKYPEALEQGRGDPIYLGIQNPEMCLYCEKVGEQPTLQLKEQKIMDLYGQPEPVKPFLFYRAKTGRTSTLESVAFPDWFIASSKRDQPIILTSELGKSYNTAFELNIND</sequence>
<proteinExistence type="evidence at protein level"/>
<comment type="function">
    <text evidence="2 3 4 5 6 7">Cytokine that binds to and signals through the IL1RL2/IL-36R receptor which in turn activates NF-kappa-B and MAPK signaling pathways in target cells. Part of the IL-36 signaling system that is thought to be present in epithelial barriers and to take part in local inflammatory response; similar to the IL-1 system with which it shares the coreceptor IL1RAP. Seems to be involved in skin inflammatory response by acting on keratinocytes, dendritic cells and indirectly on T-cells to drive tissue infiltration, cell maturation and cell proliferation. In cultured keratinocytes induces the expression of macrophage, T-cell, and neutrophil chemokines, such as CCL3, CCL4, CCL5, CCL2, CCL17, CCL22, CL20, CCL5, CCL2, CCL17, CCL22, CXCL8, CCL20 and CXCL1; also stimulates its own expression and that of the prototypic cutaneous pro-inflammatory parameters TNF-alpha, S100A7/psoriasin and inducible NOS. May play a role in pro-inflammatory responses during particular neutrophilic airway inflammation: activates mitogen-activated protein kinases and NF-kappa B in primary lung fibroblasts, and stimulates the expression of IL-8 and CXCL3 and Th17 chemokine CCL20 in lung fibroblasts. May be involved in the innate immune response to fungal pathogens, such as Aspergillus fumigatus.</text>
</comment>
<comment type="subunit">
    <text evidence="9">Interacts with cargo receptor TMED10; the interaction mediates the translocation from the cytoplasm into the ERGIC (endoplasmic reticulum-Golgi intermediate compartment) and thereby secretion.</text>
</comment>
<comment type="subcellular location">
    <subcellularLocation>
        <location evidence="9">Cytoplasm</location>
    </subcellularLocation>
    <subcellularLocation>
        <location evidence="3">Secreted</location>
    </subcellularLocation>
    <text evidence="9">The secretion is dependent on protein unfolding and facilitated by the cargo receptor TMED10; it results in protein translocation from the cytoplasm into the ERGIC (endoplasmic reticulum-Golgi intermediate compartment) followed by vesicle entry and secretion.</text>
</comment>
<comment type="alternative products">
    <event type="alternative splicing"/>
    <isoform>
        <id>Q9NZH8-1</id>
        <name>1</name>
        <sequence type="displayed"/>
    </isoform>
    <isoform>
        <id>Q9NZH8-2</id>
        <name>2</name>
        <sequence type="described" ref="VSP_013002"/>
    </isoform>
</comment>
<comment type="tissue specificity">
    <text evidence="3 5">Highly expressed in tissues containing epithelial cells: skin, lung, stomach and esophagus. Expressed in bronchial epithelial. In skin is expressed only in keratinocytes but not in fibroblasts, endothelial cells or melanocytes. Up-regulated in lesional psoriasis skin. Expressed in monocyte-derived dendritic cells and M1 macrophages.</text>
</comment>
<comment type="induction">
    <text evidence="1 6">By TNF and by IFNG/IFN-gamma in keratinocytes. By Aspergillus fumigatus conidia in peripheral blood mnonocytes; involves CLEC7A and SYK.</text>
</comment>
<comment type="PTM">
    <text evidence="4 8">N-terminal truncation leads to a dramatic enhancement of its activity (&gt;1000-fold) (PubMed:21965679). Proteolytically cleaved by cathepsin CTSG (PubMed:30804664).</text>
</comment>
<comment type="similarity">
    <text evidence="11">Belongs to the IL-1 family.</text>
</comment>
<comment type="online information" name="Wikipedia">
    <link uri="https://en.wikipedia.org/wiki/Interleukin_1"/>
    <text>Interleukin-1 entry</text>
</comment>
<organism>
    <name type="scientific">Homo sapiens</name>
    <name type="common">Human</name>
    <dbReference type="NCBI Taxonomy" id="9606"/>
    <lineage>
        <taxon>Eukaryota</taxon>
        <taxon>Metazoa</taxon>
        <taxon>Chordata</taxon>
        <taxon>Craniata</taxon>
        <taxon>Vertebrata</taxon>
        <taxon>Euteleostomi</taxon>
        <taxon>Mammalia</taxon>
        <taxon>Eutheria</taxon>
        <taxon>Euarchontoglires</taxon>
        <taxon>Primates</taxon>
        <taxon>Haplorrhini</taxon>
        <taxon>Catarrhini</taxon>
        <taxon>Hominidae</taxon>
        <taxon>Homo</taxon>
    </lineage>
</organism>
<feature type="propeptide" id="PRO_0000430549" evidence="4">
    <location>
        <begin position="1"/>
        <end position="17"/>
    </location>
</feature>
<feature type="chain" id="PRO_0000153648" description="Interleukin-36 gamma">
    <location>
        <begin position="18"/>
        <end position="169"/>
    </location>
</feature>
<feature type="splice variant" id="VSP_013002" description="In isoform 2." evidence="10">
    <original>MCKPITGTINDLNQQVWTLQGQNLVAVPRSDSVTPV</original>
    <variation>I</variation>
    <location>
        <begin position="19"/>
        <end position="54"/>
    </location>
</feature>
<feature type="sequence variant" id="VAR_024505" description="In dbSNP:rs6707930.">
    <original>Q</original>
    <variation>K</variation>
    <location>
        <position position="69"/>
    </location>
</feature>
<feature type="strand" evidence="13">
    <location>
        <begin position="23"/>
        <end position="29"/>
    </location>
</feature>
<feature type="strand" evidence="13">
    <location>
        <begin position="33"/>
        <end position="38"/>
    </location>
</feature>
<feature type="strand" evidence="13">
    <location>
        <begin position="41"/>
        <end position="46"/>
    </location>
</feature>
<feature type="helix" evidence="13">
    <location>
        <begin position="47"/>
        <end position="49"/>
    </location>
</feature>
<feature type="strand" evidence="13">
    <location>
        <begin position="55"/>
        <end position="60"/>
    </location>
</feature>
<feature type="helix" evidence="14">
    <location>
        <begin position="64"/>
        <end position="66"/>
    </location>
</feature>
<feature type="helix" evidence="14">
    <location>
        <begin position="69"/>
        <end position="71"/>
    </location>
</feature>
<feature type="strand" evidence="13">
    <location>
        <begin position="73"/>
        <end position="80"/>
    </location>
</feature>
<feature type="turn" evidence="13">
    <location>
        <begin position="81"/>
        <end position="83"/>
    </location>
</feature>
<feature type="strand" evidence="13">
    <location>
        <begin position="84"/>
        <end position="89"/>
    </location>
</feature>
<feature type="strand" evidence="13">
    <location>
        <begin position="91"/>
        <end position="94"/>
    </location>
</feature>
<feature type="strand" evidence="13">
    <location>
        <begin position="96"/>
        <end position="101"/>
    </location>
</feature>
<feature type="helix" evidence="13">
    <location>
        <begin position="104"/>
        <end position="109"/>
    </location>
</feature>
<feature type="strand" evidence="13">
    <location>
        <begin position="110"/>
        <end position="112"/>
    </location>
</feature>
<feature type="helix" evidence="13">
    <location>
        <begin position="115"/>
        <end position="117"/>
    </location>
</feature>
<feature type="strand" evidence="13">
    <location>
        <begin position="118"/>
        <end position="124"/>
    </location>
</feature>
<feature type="strand" evidence="13">
    <location>
        <begin position="127"/>
        <end position="135"/>
    </location>
</feature>
<feature type="strand" evidence="13">
    <location>
        <begin position="139"/>
        <end position="142"/>
    </location>
</feature>
<feature type="strand" evidence="13">
    <location>
        <begin position="150"/>
        <end position="153"/>
    </location>
</feature>
<feature type="strand" evidence="14">
    <location>
        <begin position="156"/>
        <end position="160"/>
    </location>
</feature>
<feature type="strand" evidence="13">
    <location>
        <begin position="163"/>
        <end position="167"/>
    </location>
</feature>
<dbReference type="EMBL" id="AF200492">
    <property type="protein sequence ID" value="AAF69248.1"/>
    <property type="molecule type" value="mRNA"/>
</dbReference>
<dbReference type="EMBL" id="AF206696">
    <property type="protein sequence ID" value="AAG35670.1"/>
    <property type="molecule type" value="mRNA"/>
</dbReference>
<dbReference type="EMBL" id="BN000002">
    <property type="protein sequence ID" value="CAD29874.1"/>
    <property type="molecule type" value="Genomic_DNA"/>
</dbReference>
<dbReference type="EMBL" id="AY359111">
    <property type="protein sequence ID" value="AAQ89469.1"/>
    <property type="molecule type" value="mRNA"/>
</dbReference>
<dbReference type="EMBL" id="AY968311">
    <property type="protein sequence ID" value="AAX59035.1"/>
    <property type="molecule type" value="Genomic_DNA"/>
</dbReference>
<dbReference type="EMBL" id="AC016724">
    <property type="protein sequence ID" value="AAY14987.1"/>
    <property type="molecule type" value="Genomic_DNA"/>
</dbReference>
<dbReference type="EMBL" id="BC096721">
    <property type="protein sequence ID" value="AAH96721.1"/>
    <property type="molecule type" value="mRNA"/>
</dbReference>
<dbReference type="EMBL" id="BC098130">
    <property type="protein sequence ID" value="AAH98130.1"/>
    <property type="molecule type" value="mRNA"/>
</dbReference>
<dbReference type="EMBL" id="BC098155">
    <property type="protein sequence ID" value="AAH98155.1"/>
    <property type="molecule type" value="mRNA"/>
</dbReference>
<dbReference type="EMBL" id="BC098337">
    <property type="protein sequence ID" value="AAH98337.1"/>
    <property type="molecule type" value="mRNA"/>
</dbReference>
<dbReference type="CCDS" id="CCDS2108.1">
    <molecule id="Q9NZH8-1"/>
</dbReference>
<dbReference type="CCDS" id="CCDS62992.1">
    <molecule id="Q9NZH8-2"/>
</dbReference>
<dbReference type="RefSeq" id="NP_001265497.1">
    <molecule id="Q9NZH8-2"/>
    <property type="nucleotide sequence ID" value="NM_001278568.2"/>
</dbReference>
<dbReference type="RefSeq" id="NP_062564.1">
    <molecule id="Q9NZH8-1"/>
    <property type="nucleotide sequence ID" value="NM_019618.4"/>
</dbReference>
<dbReference type="PDB" id="4IZE">
    <property type="method" value="X-ray"/>
    <property type="resolution" value="2.00 A"/>
    <property type="chains" value="A=18-169"/>
</dbReference>
<dbReference type="PDB" id="4P0J">
    <property type="method" value="X-ray"/>
    <property type="resolution" value="2.30 A"/>
    <property type="chains" value="A/B=154-160"/>
</dbReference>
<dbReference type="PDB" id="4P0K">
    <property type="method" value="X-ray"/>
    <property type="resolution" value="1.70 A"/>
    <property type="chains" value="A=64-72, A=154-160"/>
</dbReference>
<dbReference type="PDB" id="4P0L">
    <property type="method" value="X-ray"/>
    <property type="resolution" value="1.55 A"/>
    <property type="chains" value="A=64-72, A=154-160"/>
</dbReference>
<dbReference type="PDB" id="6P9E">
    <property type="method" value="X-ray"/>
    <property type="resolution" value="2.00 A"/>
    <property type="chains" value="A=18-169"/>
</dbReference>
<dbReference type="PDBsum" id="4IZE"/>
<dbReference type="PDBsum" id="4P0J"/>
<dbReference type="PDBsum" id="4P0K"/>
<dbReference type="PDBsum" id="4P0L"/>
<dbReference type="PDBsum" id="6P9E"/>
<dbReference type="SMR" id="Q9NZH8"/>
<dbReference type="BioGRID" id="121135">
    <property type="interactions" value="81"/>
</dbReference>
<dbReference type="ComplexPortal" id="CPX-10341">
    <property type="entry name" value="Interleukin-36G receptor ligand complex"/>
</dbReference>
<dbReference type="CORUM" id="Q9NZH8"/>
<dbReference type="FunCoup" id="Q9NZH8">
    <property type="interactions" value="408"/>
</dbReference>
<dbReference type="IntAct" id="Q9NZH8">
    <property type="interactions" value="36"/>
</dbReference>
<dbReference type="STRING" id="9606.ENSP00000259205"/>
<dbReference type="BindingDB" id="Q9NZH8"/>
<dbReference type="ChEMBL" id="CHEMBL5291561"/>
<dbReference type="iPTMnet" id="Q9NZH8"/>
<dbReference type="PhosphoSitePlus" id="Q9NZH8"/>
<dbReference type="BioMuta" id="IL36G"/>
<dbReference type="jPOST" id="Q9NZH8"/>
<dbReference type="MassIVE" id="Q9NZH8"/>
<dbReference type="PaxDb" id="9606-ENSP00000259205"/>
<dbReference type="PeptideAtlas" id="Q9NZH8"/>
<dbReference type="PRIDE" id="Q9NZH8"/>
<dbReference type="ProteomicsDB" id="83397">
    <molecule id="Q9NZH8-1"/>
</dbReference>
<dbReference type="ProteomicsDB" id="83398">
    <molecule id="Q9NZH8-2"/>
</dbReference>
<dbReference type="Pumba" id="Q9NZH8"/>
<dbReference type="Antibodypedia" id="33310">
    <property type="antibodies" value="343 antibodies from 34 providers"/>
</dbReference>
<dbReference type="DNASU" id="56300"/>
<dbReference type="Ensembl" id="ENST00000259205.5">
    <molecule id="Q9NZH8-1"/>
    <property type="protein sequence ID" value="ENSP00000259205.3"/>
    <property type="gene ID" value="ENSG00000136688.11"/>
</dbReference>
<dbReference type="Ensembl" id="ENST00000376489.6">
    <molecule id="Q9NZH8-2"/>
    <property type="protein sequence ID" value="ENSP00000365672.2"/>
    <property type="gene ID" value="ENSG00000136688.11"/>
</dbReference>
<dbReference type="GeneID" id="56300"/>
<dbReference type="KEGG" id="hsa:56300"/>
<dbReference type="MANE-Select" id="ENST00000259205.5">
    <property type="protein sequence ID" value="ENSP00000259205.3"/>
    <property type="RefSeq nucleotide sequence ID" value="NM_019618.4"/>
    <property type="RefSeq protein sequence ID" value="NP_062564.1"/>
</dbReference>
<dbReference type="UCSC" id="uc002tio.3">
    <molecule id="Q9NZH8-1"/>
    <property type="organism name" value="human"/>
</dbReference>
<dbReference type="AGR" id="HGNC:15741"/>
<dbReference type="CTD" id="56300"/>
<dbReference type="DisGeNET" id="56300"/>
<dbReference type="GeneCards" id="IL36G"/>
<dbReference type="HGNC" id="HGNC:15741">
    <property type="gene designation" value="IL36G"/>
</dbReference>
<dbReference type="HPA" id="ENSG00000136688">
    <property type="expression patterns" value="Group enriched (esophagus, lymphoid tissue, skin)"/>
</dbReference>
<dbReference type="MalaCards" id="IL36G"/>
<dbReference type="MIM" id="605542">
    <property type="type" value="gene"/>
</dbReference>
<dbReference type="neXtProt" id="NX_Q9NZH8"/>
<dbReference type="OpenTargets" id="ENSG00000136688"/>
<dbReference type="PharmGKB" id="PA38395"/>
<dbReference type="VEuPathDB" id="HostDB:ENSG00000136688"/>
<dbReference type="eggNOG" id="ENOG502STX9">
    <property type="taxonomic scope" value="Eukaryota"/>
</dbReference>
<dbReference type="GeneTree" id="ENSGT00950000182943"/>
<dbReference type="HOGENOM" id="CLU_095373_1_1_1"/>
<dbReference type="InParanoid" id="Q9NZH8"/>
<dbReference type="OMA" id="MCLFCED"/>
<dbReference type="OrthoDB" id="9449069at2759"/>
<dbReference type="PAN-GO" id="Q9NZH8">
    <property type="GO annotations" value="6 GO annotations based on evolutionary models"/>
</dbReference>
<dbReference type="PhylomeDB" id="Q9NZH8"/>
<dbReference type="TreeFam" id="TF300203"/>
<dbReference type="PathwayCommons" id="Q9NZH8"/>
<dbReference type="Reactome" id="R-HSA-9014826">
    <property type="pathway name" value="Interleukin-36 pathway"/>
</dbReference>
<dbReference type="SignaLink" id="Q9NZH8"/>
<dbReference type="BioGRID-ORCS" id="56300">
    <property type="hits" value="12 hits in 1136 CRISPR screens"/>
</dbReference>
<dbReference type="EvolutionaryTrace" id="Q9NZH8"/>
<dbReference type="GeneWiki" id="IL1F9"/>
<dbReference type="GenomeRNAi" id="56300"/>
<dbReference type="Pharos" id="Q9NZH8">
    <property type="development level" value="Tbio"/>
</dbReference>
<dbReference type="PRO" id="PR:Q9NZH8"/>
<dbReference type="Proteomes" id="UP000005640">
    <property type="component" value="Chromosome 2"/>
</dbReference>
<dbReference type="RNAct" id="Q9NZH8">
    <property type="molecule type" value="protein"/>
</dbReference>
<dbReference type="Bgee" id="ENSG00000136688">
    <property type="expression patterns" value="Expressed in periodontal ligament and 99 other cell types or tissues"/>
</dbReference>
<dbReference type="ExpressionAtlas" id="Q9NZH8">
    <property type="expression patterns" value="baseline and differential"/>
</dbReference>
<dbReference type="GO" id="GO:0005829">
    <property type="term" value="C:cytosol"/>
    <property type="evidence" value="ECO:0000314"/>
    <property type="project" value="HPA"/>
</dbReference>
<dbReference type="GO" id="GO:0005576">
    <property type="term" value="C:extracellular region"/>
    <property type="evidence" value="ECO:0000304"/>
    <property type="project" value="Reactome"/>
</dbReference>
<dbReference type="GO" id="GO:0005615">
    <property type="term" value="C:extracellular space"/>
    <property type="evidence" value="ECO:0000318"/>
    <property type="project" value="GO_Central"/>
</dbReference>
<dbReference type="GO" id="GO:0005654">
    <property type="term" value="C:nucleoplasm"/>
    <property type="evidence" value="ECO:0000314"/>
    <property type="project" value="HPA"/>
</dbReference>
<dbReference type="GO" id="GO:0005886">
    <property type="term" value="C:plasma membrane"/>
    <property type="evidence" value="ECO:0000314"/>
    <property type="project" value="HPA"/>
</dbReference>
<dbReference type="GO" id="GO:0005125">
    <property type="term" value="F:cytokine activity"/>
    <property type="evidence" value="ECO:0000318"/>
    <property type="project" value="GO_Central"/>
</dbReference>
<dbReference type="GO" id="GO:0005149">
    <property type="term" value="F:interleukin-1 receptor binding"/>
    <property type="evidence" value="ECO:0007669"/>
    <property type="project" value="InterPro"/>
</dbReference>
<dbReference type="GO" id="GO:0007267">
    <property type="term" value="P:cell-cell signaling"/>
    <property type="evidence" value="ECO:0000304"/>
    <property type="project" value="ProtInc"/>
</dbReference>
<dbReference type="GO" id="GO:0071222">
    <property type="term" value="P:cellular response to lipopolysaccharide"/>
    <property type="evidence" value="ECO:0000318"/>
    <property type="project" value="GO_Central"/>
</dbReference>
<dbReference type="GO" id="GO:0019221">
    <property type="term" value="P:cytokine-mediated signaling pathway"/>
    <property type="evidence" value="ECO:0000318"/>
    <property type="project" value="GO_Central"/>
</dbReference>
<dbReference type="GO" id="GO:0006955">
    <property type="term" value="P:immune response"/>
    <property type="evidence" value="ECO:0000318"/>
    <property type="project" value="GO_Central"/>
</dbReference>
<dbReference type="GO" id="GO:0006954">
    <property type="term" value="P:inflammatory response"/>
    <property type="evidence" value="ECO:0000318"/>
    <property type="project" value="GO_Central"/>
</dbReference>
<dbReference type="GO" id="GO:0045087">
    <property type="term" value="P:innate immune response"/>
    <property type="evidence" value="ECO:0007669"/>
    <property type="project" value="UniProtKB-KW"/>
</dbReference>
<dbReference type="CDD" id="cd23300">
    <property type="entry name" value="beta-trefoil_IL36"/>
    <property type="match status" value="1"/>
</dbReference>
<dbReference type="FunFam" id="2.80.10.50:FF:000013">
    <property type="entry name" value="Interleukin-1"/>
    <property type="match status" value="1"/>
</dbReference>
<dbReference type="Gene3D" id="2.80.10.50">
    <property type="match status" value="1"/>
</dbReference>
<dbReference type="InterPro" id="IPR000975">
    <property type="entry name" value="IL-1_fam"/>
</dbReference>
<dbReference type="InterPro" id="IPR003297">
    <property type="entry name" value="IL-1RA/IL-36"/>
</dbReference>
<dbReference type="InterPro" id="IPR008996">
    <property type="entry name" value="IL1/FGF"/>
</dbReference>
<dbReference type="PANTHER" id="PTHR10078">
    <property type="entry name" value="INTERLEUKIN-1 FAMILY MEMBER"/>
    <property type="match status" value="1"/>
</dbReference>
<dbReference type="PANTHER" id="PTHR10078:SF27">
    <property type="entry name" value="INTERLEUKIN-36 GAMMA"/>
    <property type="match status" value="1"/>
</dbReference>
<dbReference type="Pfam" id="PF00340">
    <property type="entry name" value="IL1"/>
    <property type="match status" value="1"/>
</dbReference>
<dbReference type="PRINTS" id="PR00264">
    <property type="entry name" value="INTERLEUKIN1"/>
</dbReference>
<dbReference type="PRINTS" id="PR01360">
    <property type="entry name" value="INTRLEUKIN1X"/>
</dbReference>
<dbReference type="SMART" id="SM00125">
    <property type="entry name" value="IL1"/>
    <property type="match status" value="1"/>
</dbReference>
<dbReference type="SUPFAM" id="SSF50353">
    <property type="entry name" value="Cytokine"/>
    <property type="match status" value="1"/>
</dbReference>
<name>IL36G_HUMAN</name>
<keyword id="KW-0002">3D-structure</keyword>
<keyword id="KW-0025">Alternative splicing</keyword>
<keyword id="KW-0202">Cytokine</keyword>
<keyword id="KW-0963">Cytoplasm</keyword>
<keyword id="KW-0391">Immunity</keyword>
<keyword id="KW-0395">Inflammatory response</keyword>
<keyword id="KW-0399">Innate immunity</keyword>
<keyword id="KW-1267">Proteomics identification</keyword>
<keyword id="KW-1185">Reference proteome</keyword>
<keyword id="KW-0964">Secreted</keyword>
<accession>Q9NZH8</accession>
<accession>Q56B91</accession>
<accession>Q6UVX7</accession>
<accession>Q7RTZ9</accession>
<protein>
    <recommendedName>
        <fullName>Interleukin-36 gamma</fullName>
    </recommendedName>
    <alternativeName>
        <fullName>IL-1-related protein 2</fullName>
        <shortName>IL-1RP2</shortName>
    </alternativeName>
    <alternativeName>
        <fullName>Interleukin-1 epsilon</fullName>
        <shortName>IL-1 epsilon</shortName>
    </alternativeName>
    <alternativeName>
        <fullName>Interleukin-1 family member 9</fullName>
        <shortName>IL-1F9</shortName>
    </alternativeName>
    <alternativeName>
        <fullName>Interleukin-1 homolog 1</fullName>
        <shortName>IL-1H1</shortName>
    </alternativeName>
</protein>
<gene>
    <name evidence="12" type="primary">IL36G</name>
    <name type="synonym">IL1E</name>
    <name type="synonym">IL1F9</name>
    <name type="synonym">IL1H1</name>
    <name type="synonym">IL1RP2</name>
    <name type="ORF">UNQ2456/PRO5737</name>
</gene>
<evidence type="ECO:0000269" key="1">
    <source>
    </source>
</evidence>
<evidence type="ECO:0000269" key="2">
    <source>
    </source>
</evidence>
<evidence type="ECO:0000269" key="3">
    <source>
    </source>
</evidence>
<evidence type="ECO:0000269" key="4">
    <source>
    </source>
</evidence>
<evidence type="ECO:0000269" key="5">
    <source>
    </source>
</evidence>
<evidence type="ECO:0000269" key="6">
    <source>
    </source>
</evidence>
<evidence type="ECO:0000269" key="7">
    <source>
    </source>
</evidence>
<evidence type="ECO:0000269" key="8">
    <source>
    </source>
</evidence>
<evidence type="ECO:0000269" key="9">
    <source>
    </source>
</evidence>
<evidence type="ECO:0000303" key="10">
    <source>
    </source>
</evidence>
<evidence type="ECO:0000305" key="11"/>
<evidence type="ECO:0000312" key="12">
    <source>
        <dbReference type="HGNC" id="HGNC:15741"/>
    </source>
</evidence>
<evidence type="ECO:0007829" key="13">
    <source>
        <dbReference type="PDB" id="4IZE"/>
    </source>
</evidence>
<evidence type="ECO:0007829" key="14">
    <source>
        <dbReference type="PDB" id="4P0L"/>
    </source>
</evidence>